<organism>
    <name type="scientific">Yarrowia lipolytica (strain CLIB 122 / E 150)</name>
    <name type="common">Yeast</name>
    <name type="synonym">Candida lipolytica</name>
    <dbReference type="NCBI Taxonomy" id="284591"/>
    <lineage>
        <taxon>Eukaryota</taxon>
        <taxon>Fungi</taxon>
        <taxon>Dikarya</taxon>
        <taxon>Ascomycota</taxon>
        <taxon>Saccharomycotina</taxon>
        <taxon>Dipodascomycetes</taxon>
        <taxon>Dipodascales</taxon>
        <taxon>Dipodascales incertae sedis</taxon>
        <taxon>Yarrowia</taxon>
    </lineage>
</organism>
<dbReference type="EC" id="2.4.1.-" evidence="1"/>
<dbReference type="EC" id="2.4.1.173" evidence="1"/>
<dbReference type="EMBL" id="CR382130">
    <property type="protein sequence ID" value="CAG81176.2"/>
    <property type="molecule type" value="Genomic_DNA"/>
</dbReference>
<dbReference type="RefSeq" id="XP_502984.2">
    <property type="nucleotide sequence ID" value="XM_502984.2"/>
</dbReference>
<dbReference type="SMR" id="Q6C8M8"/>
<dbReference type="FunCoup" id="Q6C8M8">
    <property type="interactions" value="105"/>
</dbReference>
<dbReference type="STRING" id="284591.Q6C8M8"/>
<dbReference type="CAZy" id="GT1">
    <property type="family name" value="Glycosyltransferase Family 1"/>
</dbReference>
<dbReference type="EnsemblFungi" id="CAG81176">
    <property type="protein sequence ID" value="CAG81176"/>
    <property type="gene ID" value="YALI0_D18403g"/>
</dbReference>
<dbReference type="KEGG" id="yli:2911115"/>
<dbReference type="VEuPathDB" id="FungiDB:YALI0_D18403g"/>
<dbReference type="HOGENOM" id="CLU_000537_6_0_1"/>
<dbReference type="InParanoid" id="Q6C8M8"/>
<dbReference type="OMA" id="WRNKTLG"/>
<dbReference type="OrthoDB" id="118141at4891"/>
<dbReference type="Proteomes" id="UP000001300">
    <property type="component" value="Chromosome D"/>
</dbReference>
<dbReference type="GO" id="GO:0005737">
    <property type="term" value="C:cytoplasm"/>
    <property type="evidence" value="ECO:0007669"/>
    <property type="project" value="UniProtKB-SubCell"/>
</dbReference>
<dbReference type="GO" id="GO:0016020">
    <property type="term" value="C:membrane"/>
    <property type="evidence" value="ECO:0007669"/>
    <property type="project" value="UniProtKB-SubCell"/>
</dbReference>
<dbReference type="GO" id="GO:0016906">
    <property type="term" value="F:sterol 3-beta-glucosyltransferase activity"/>
    <property type="evidence" value="ECO:0007669"/>
    <property type="project" value="UniProtKB-EC"/>
</dbReference>
<dbReference type="GO" id="GO:0008194">
    <property type="term" value="F:UDP-glycosyltransferase activity"/>
    <property type="evidence" value="ECO:0000318"/>
    <property type="project" value="GO_Central"/>
</dbReference>
<dbReference type="GO" id="GO:0005975">
    <property type="term" value="P:carbohydrate metabolic process"/>
    <property type="evidence" value="ECO:0007669"/>
    <property type="project" value="InterPro"/>
</dbReference>
<dbReference type="GO" id="GO:0030259">
    <property type="term" value="P:lipid glycosylation"/>
    <property type="evidence" value="ECO:0007669"/>
    <property type="project" value="InterPro"/>
</dbReference>
<dbReference type="GO" id="GO:0016126">
    <property type="term" value="P:sterol biosynthetic process"/>
    <property type="evidence" value="ECO:0007669"/>
    <property type="project" value="UniProtKB-KW"/>
</dbReference>
<dbReference type="GO" id="GO:0016125">
    <property type="term" value="P:sterol metabolic process"/>
    <property type="evidence" value="ECO:0000318"/>
    <property type="project" value="GO_Central"/>
</dbReference>
<dbReference type="CDD" id="cd03784">
    <property type="entry name" value="GT1_Gtf-like"/>
    <property type="match status" value="1"/>
</dbReference>
<dbReference type="CDD" id="cd13215">
    <property type="entry name" value="PH-GRAM1_AGT26"/>
    <property type="match status" value="1"/>
</dbReference>
<dbReference type="CDD" id="cd13216">
    <property type="entry name" value="PH-GRAM2_AGT26"/>
    <property type="match status" value="1"/>
</dbReference>
<dbReference type="FunFam" id="2.30.29.30:FF:000303">
    <property type="entry name" value="Sterol 3-beta-glucosyltransferase"/>
    <property type="match status" value="1"/>
</dbReference>
<dbReference type="FunFam" id="2.30.29.30:FF:000391">
    <property type="entry name" value="Sterol 3-beta-glucosyltransferase"/>
    <property type="match status" value="1"/>
</dbReference>
<dbReference type="FunFam" id="3.40.50.2000:FF:000029">
    <property type="entry name" value="Sterol 3-beta-glucosyltransferase"/>
    <property type="match status" value="1"/>
</dbReference>
<dbReference type="FunFam" id="3.40.50.2000:FF:000009">
    <property type="entry name" value="Sterol 3-beta-glucosyltransferase UGT80A2"/>
    <property type="match status" value="1"/>
</dbReference>
<dbReference type="Gene3D" id="3.40.50.2000">
    <property type="entry name" value="Glycogen Phosphorylase B"/>
    <property type="match status" value="2"/>
</dbReference>
<dbReference type="Gene3D" id="2.30.29.30">
    <property type="entry name" value="Pleckstrin-homology domain (PH domain)/Phosphotyrosine-binding domain (PTB)"/>
    <property type="match status" value="2"/>
</dbReference>
<dbReference type="InterPro" id="IPR048066">
    <property type="entry name" value="ATG26_PH_GRAM1"/>
</dbReference>
<dbReference type="InterPro" id="IPR048065">
    <property type="entry name" value="ATG26_PH_GRAM2"/>
</dbReference>
<dbReference type="InterPro" id="IPR010610">
    <property type="entry name" value="EryCIII-like_C"/>
</dbReference>
<dbReference type="InterPro" id="IPR050426">
    <property type="entry name" value="Glycosyltransferase_28"/>
</dbReference>
<dbReference type="InterPro" id="IPR004276">
    <property type="entry name" value="GlycoTrans_28_N"/>
</dbReference>
<dbReference type="InterPro" id="IPR004182">
    <property type="entry name" value="GRAM"/>
</dbReference>
<dbReference type="InterPro" id="IPR011993">
    <property type="entry name" value="PH-like_dom_sf"/>
</dbReference>
<dbReference type="InterPro" id="IPR001849">
    <property type="entry name" value="PH_domain"/>
</dbReference>
<dbReference type="InterPro" id="IPR002213">
    <property type="entry name" value="UDP_glucos_trans"/>
</dbReference>
<dbReference type="PANTHER" id="PTHR48050">
    <property type="entry name" value="STEROL 3-BETA-GLUCOSYLTRANSFERASE"/>
    <property type="match status" value="1"/>
</dbReference>
<dbReference type="PANTHER" id="PTHR48050:SF25">
    <property type="entry name" value="STEROL 3-BETA-GLUCOSYLTRANSFERASE"/>
    <property type="match status" value="1"/>
</dbReference>
<dbReference type="Pfam" id="PF06722">
    <property type="entry name" value="EryCIII-like_C"/>
    <property type="match status" value="1"/>
</dbReference>
<dbReference type="Pfam" id="PF03033">
    <property type="entry name" value="Glyco_transf_28"/>
    <property type="match status" value="1"/>
</dbReference>
<dbReference type="Pfam" id="PF02893">
    <property type="entry name" value="GRAM"/>
    <property type="match status" value="2"/>
</dbReference>
<dbReference type="Pfam" id="PF00169">
    <property type="entry name" value="PH"/>
    <property type="match status" value="1"/>
</dbReference>
<dbReference type="SMART" id="SM00568">
    <property type="entry name" value="GRAM"/>
    <property type="match status" value="2"/>
</dbReference>
<dbReference type="SMART" id="SM00233">
    <property type="entry name" value="PH"/>
    <property type="match status" value="1"/>
</dbReference>
<dbReference type="SUPFAM" id="SSF50729">
    <property type="entry name" value="PH domain-like"/>
    <property type="match status" value="1"/>
</dbReference>
<dbReference type="SUPFAM" id="SSF53756">
    <property type="entry name" value="UDP-Glycosyltransferase/glycogen phosphorylase"/>
    <property type="match status" value="1"/>
</dbReference>
<dbReference type="PROSITE" id="PS50003">
    <property type="entry name" value="PH_DOMAIN"/>
    <property type="match status" value="1"/>
</dbReference>
<feature type="chain" id="PRO_0000215615" description="Sterol 3-beta-glucosyltransferase">
    <location>
        <begin position="1"/>
        <end position="1456"/>
    </location>
</feature>
<feature type="domain" description="GRAM 1" evidence="2">
    <location>
        <begin position="200"/>
        <end position="247"/>
    </location>
</feature>
<feature type="domain" description="PH" evidence="3">
    <location>
        <begin position="251"/>
        <end position="351"/>
    </location>
</feature>
<feature type="domain" description="GRAM 2" evidence="2">
    <location>
        <begin position="827"/>
        <end position="893"/>
    </location>
</feature>
<feature type="region of interest" description="Disordered" evidence="4">
    <location>
        <begin position="60"/>
        <end position="113"/>
    </location>
</feature>
<feature type="region of interest" description="Disordered" evidence="4">
    <location>
        <begin position="128"/>
        <end position="156"/>
    </location>
</feature>
<feature type="region of interest" description="Disordered" evidence="4">
    <location>
        <begin position="462"/>
        <end position="512"/>
    </location>
</feature>
<feature type="region of interest" description="Disordered" evidence="4">
    <location>
        <begin position="524"/>
        <end position="776"/>
    </location>
</feature>
<feature type="compositionally biased region" description="Acidic residues" evidence="4">
    <location>
        <begin position="60"/>
        <end position="70"/>
    </location>
</feature>
<feature type="compositionally biased region" description="Low complexity" evidence="4">
    <location>
        <begin position="71"/>
        <end position="104"/>
    </location>
</feature>
<feature type="compositionally biased region" description="Basic and acidic residues" evidence="4">
    <location>
        <begin position="137"/>
        <end position="146"/>
    </location>
</feature>
<feature type="compositionally biased region" description="Basic and acidic residues" evidence="4">
    <location>
        <begin position="496"/>
        <end position="508"/>
    </location>
</feature>
<feature type="compositionally biased region" description="Polar residues" evidence="4">
    <location>
        <begin position="556"/>
        <end position="567"/>
    </location>
</feature>
<feature type="compositionally biased region" description="Low complexity" evidence="4">
    <location>
        <begin position="576"/>
        <end position="606"/>
    </location>
</feature>
<feature type="compositionally biased region" description="Low complexity" evidence="4">
    <location>
        <begin position="647"/>
        <end position="676"/>
    </location>
</feature>
<feature type="compositionally biased region" description="Gly residues" evidence="4">
    <location>
        <begin position="677"/>
        <end position="696"/>
    </location>
</feature>
<feature type="compositionally biased region" description="Low complexity" evidence="4">
    <location>
        <begin position="719"/>
        <end position="735"/>
    </location>
</feature>
<feature type="binding site" evidence="1">
    <location>
        <position position="1004"/>
    </location>
    <ligand>
        <name>UDP-alpha-D-glucose</name>
        <dbReference type="ChEBI" id="CHEBI:58885"/>
    </ligand>
</feature>
<feature type="binding site" evidence="1">
    <location>
        <position position="1005"/>
    </location>
    <ligand>
        <name>UDP-alpha-D-glucose</name>
        <dbReference type="ChEBI" id="CHEBI:58885"/>
    </ligand>
</feature>
<feature type="binding site" evidence="1">
    <location>
        <position position="1007"/>
    </location>
    <ligand>
        <name>UDP-alpha-D-glucose</name>
        <dbReference type="ChEBI" id="CHEBI:58885"/>
    </ligand>
</feature>
<feature type="binding site" evidence="1">
    <location>
        <position position="1279"/>
    </location>
    <ligand>
        <name>UDP-alpha-D-glucose</name>
        <dbReference type="ChEBI" id="CHEBI:58885"/>
    </ligand>
</feature>
<feature type="binding site" evidence="1">
    <location>
        <position position="1307"/>
    </location>
    <ligand>
        <name>UDP-alpha-D-glucose</name>
        <dbReference type="ChEBI" id="CHEBI:58885"/>
    </ligand>
</feature>
<feature type="binding site" evidence="1">
    <location>
        <position position="1310"/>
    </location>
    <ligand>
        <name>UDP-alpha-D-glucose</name>
        <dbReference type="ChEBI" id="CHEBI:58885"/>
    </ligand>
</feature>
<feature type="binding site" evidence="1">
    <location>
        <position position="1323"/>
    </location>
    <ligand>
        <name>UDP-alpha-D-glucose</name>
        <dbReference type="ChEBI" id="CHEBI:58885"/>
    </ligand>
</feature>
<feature type="binding site" evidence="1">
    <location>
        <position position="1326"/>
    </location>
    <ligand>
        <name>UDP-alpha-D-glucose</name>
        <dbReference type="ChEBI" id="CHEBI:58885"/>
    </ligand>
</feature>
<feature type="binding site" evidence="1">
    <location>
        <position position="1327"/>
    </location>
    <ligand>
        <name>UDP-alpha-D-glucose</name>
        <dbReference type="ChEBI" id="CHEBI:58885"/>
    </ligand>
</feature>
<feature type="binding site" evidence="1">
    <location>
        <position position="1328"/>
    </location>
    <ligand>
        <name>UDP-alpha-D-glucose</name>
        <dbReference type="ChEBI" id="CHEBI:58885"/>
    </ligand>
</feature>
<feature type="binding site" evidence="1">
    <location>
        <position position="1347"/>
    </location>
    <ligand>
        <name>UDP-alpha-D-glucose</name>
        <dbReference type="ChEBI" id="CHEBI:58885"/>
    </ligand>
</feature>
<feature type="binding site" evidence="1">
    <location>
        <position position="1348"/>
    </location>
    <ligand>
        <name>UDP-alpha-D-glucose</name>
        <dbReference type="ChEBI" id="CHEBI:58885"/>
    </ligand>
</feature>
<name>ATG26_YARLI</name>
<evidence type="ECO:0000250" key="1">
    <source>
        <dbReference type="UniProtKB" id="Q06321"/>
    </source>
</evidence>
<evidence type="ECO:0000255" key="2"/>
<evidence type="ECO:0000255" key="3">
    <source>
        <dbReference type="PROSITE-ProRule" id="PRU00145"/>
    </source>
</evidence>
<evidence type="ECO:0000256" key="4">
    <source>
        <dbReference type="SAM" id="MobiDB-lite"/>
    </source>
</evidence>
<evidence type="ECO:0000305" key="5"/>
<gene>
    <name evidence="1" type="primary">ATG26</name>
    <name type="ordered locus">YALI0D18403g</name>
</gene>
<keyword id="KW-0963">Cytoplasm</keyword>
<keyword id="KW-0328">Glycosyltransferase</keyword>
<keyword id="KW-0444">Lipid biosynthesis</keyword>
<keyword id="KW-0443">Lipid metabolism</keyword>
<keyword id="KW-0472">Membrane</keyword>
<keyword id="KW-1185">Reference proteome</keyword>
<keyword id="KW-0677">Repeat</keyword>
<keyword id="KW-0752">Steroid biosynthesis</keyword>
<keyword id="KW-0753">Steroid metabolism</keyword>
<keyword id="KW-0756">Sterol biosynthesis</keyword>
<keyword id="KW-1207">Sterol metabolism</keyword>
<keyword id="KW-0808">Transferase</keyword>
<proteinExistence type="inferred from homology"/>
<sequence length="1456" mass="159607">MLSASQFLKHRVSCLPMLNKVESDSTDGDPDDACQHPHDCNIFSVLVNGATDRLEGFFDESDEEDGDEVETPSTTTTAVSPSATMSAPSPTATAPTPHSGTHTPKSPLHSISHCPSFNSVAQALPHSLSPHSLCHTSSHEASRRGSAEQPSRTQSELARRIKTENILNSFHDSLEAAYEKCHGGANPEEHQSNKTEYFQQKLKGFAALDVDEQLIADYPVWLLKNVLIQGHLYITAKHMCFLSYLPRRQNANIRSGTLVKARKRSLREGTRYWCVLKNDSFSYYPDSTDVYFPAGTIDLSEALAAELCDDEGDVTEPESFRIVMPKKSVLFKADSHSAAHEWVKALQKEIFRAHNQGDTVRIVIPLQNIVDLEKTKIFEFATTIKTSVVESNETYAIDEYIFTFFKFGDDVLRTLTENGVEISGGNFSPRQSQLAVGHKHVTESVRDSTLLHASGHHHHFFHSAHHESDGKSNSKSHTSSRSHTPRNLTPQVTGEQPHERDEKRDSKLPRLPKFLRRFKDKVDDKCDDKPTLVPSFLKSRASSRRNSAEGSDRPNLASQRTSSSTLFPSAPPTPGSQPTTPGVHAPGSSTPGGSYGTTTPGTPASADSVSLAGTPGVAAPVGDIEGLNGNPMPAGIAAELKEKRKSGGATSSGAATGATTPGGAAAPGSTGNSSPGTPGGLGGPGAVGAGGPGVMGGAESAPAGTVPQQSHHAGISVVAPHDPAAAAAAADAAAPFTRGPGSGIPEIQDDSDSSDDDHWGHIGTAEVDEDPEQDTFKKKNKRFSTLSKVSDLWSGSTKHYGKHHTERLGDDDDKHLASAEEITESNERFQKRFALGTEERLIASYHCHLHRGGIPTYGKMYVSTNYVTFRSFLRTKTLMIVPLKVVENATKDSGFKFGYSGLVLTIQGYEEIFFEFASASHRDDAEVMLLRQLDIIRPHINDDIKSDDQYMLQSARLCTYEDALKAEANVEMPPVIIDGNLASVLPGLVTPQSKMLFTLLTIGSRGDVQPYISLGKALIEEGHRVRIATHSEFKDWIEGYGIEFKEVAGDPSELMKIMVDHGVFSVSFLRDAASKFRGWINELLASSWEACQGSDVLIESPSAMAGIHIAEALQIPYFRAFTMPWSRTRAYPHAFIVPDQKMGGSYNYLTYVMFDNVFWKGISGQVNRWRKKTLHLPRTNLDHMEQNKVPFLYNVSPAVLPPPVDFPDWIKITGYWFLDEGSKDYTPDDKLCRFMEKARNDGKKLVYIGFGSIVVSDPTALTKSVVESVLKADVRCILNKGWSDRLGKKDAKEPEIPLPEEVLQITNCPHDWLFPQIDACVHHGGSGTTGAGLRAGLPTIIKPFFGDQFFYANRVEDLGAGIHLRKLNVSQFSKALWEATHNERIIAKAAAVGRQIRSENGVISAIQAIYRDLDYARSLVQKKRGYTPTSDKEEETWTLVDDIERQMQDEVEKHNL</sequence>
<protein>
    <recommendedName>
        <fullName evidence="5">Sterol 3-beta-glucosyltransferase</fullName>
        <ecNumber evidence="1">2.4.1.-</ecNumber>
        <ecNumber evidence="1">2.4.1.173</ecNumber>
    </recommendedName>
    <alternativeName>
        <fullName evidence="1">Autophagy-related protein 26</fullName>
    </alternativeName>
</protein>
<comment type="function">
    <text evidence="1">Sterol glycosyltransferase responsible for the glycosylation of ergosterol to form ergosterol-glucoside.</text>
</comment>
<comment type="catalytic activity">
    <reaction evidence="1">
        <text>a sterol + UDP-alpha-D-glucose = a sterol 3-beta-D-glucoside + UDP + H(+)</text>
        <dbReference type="Rhea" id="RHEA:22724"/>
        <dbReference type="ChEBI" id="CHEBI:15378"/>
        <dbReference type="ChEBI" id="CHEBI:15889"/>
        <dbReference type="ChEBI" id="CHEBI:37424"/>
        <dbReference type="ChEBI" id="CHEBI:58223"/>
        <dbReference type="ChEBI" id="CHEBI:58885"/>
        <dbReference type="EC" id="2.4.1.173"/>
    </reaction>
    <physiologicalReaction direction="left-to-right" evidence="1">
        <dbReference type="Rhea" id="RHEA:22725"/>
    </physiologicalReaction>
</comment>
<comment type="catalytic activity">
    <reaction evidence="1">
        <text>ergosterol + UDP-alpha-D-glucose = ergosteryl 3-beta-D-glucoside + UDP + H(+)</text>
        <dbReference type="Rhea" id="RHEA:61836"/>
        <dbReference type="ChEBI" id="CHEBI:15378"/>
        <dbReference type="ChEBI" id="CHEBI:16933"/>
        <dbReference type="ChEBI" id="CHEBI:52973"/>
        <dbReference type="ChEBI" id="CHEBI:58223"/>
        <dbReference type="ChEBI" id="CHEBI:58885"/>
    </reaction>
    <physiologicalReaction direction="left-to-right" evidence="1">
        <dbReference type="Rhea" id="RHEA:61837"/>
    </physiologicalReaction>
</comment>
<comment type="subcellular location">
    <subcellularLocation>
        <location evidence="1">Cytoplasm</location>
    </subcellularLocation>
    <subcellularLocation>
        <location evidence="1">Membrane</location>
        <topology evidence="1">Peripheral membrane protein</topology>
    </subcellularLocation>
</comment>
<comment type="similarity">
    <text evidence="5">Belongs to the glycosyltransferase 28 family.</text>
</comment>
<reference key="1">
    <citation type="journal article" date="2004" name="Nature">
        <title>Genome evolution in yeasts.</title>
        <authorList>
            <person name="Dujon B."/>
            <person name="Sherman D."/>
            <person name="Fischer G."/>
            <person name="Durrens P."/>
            <person name="Casaregola S."/>
            <person name="Lafontaine I."/>
            <person name="de Montigny J."/>
            <person name="Marck C."/>
            <person name="Neuveglise C."/>
            <person name="Talla E."/>
            <person name="Goffard N."/>
            <person name="Frangeul L."/>
            <person name="Aigle M."/>
            <person name="Anthouard V."/>
            <person name="Babour A."/>
            <person name="Barbe V."/>
            <person name="Barnay S."/>
            <person name="Blanchin S."/>
            <person name="Beckerich J.-M."/>
            <person name="Beyne E."/>
            <person name="Bleykasten C."/>
            <person name="Boisrame A."/>
            <person name="Boyer J."/>
            <person name="Cattolico L."/>
            <person name="Confanioleri F."/>
            <person name="de Daruvar A."/>
            <person name="Despons L."/>
            <person name="Fabre E."/>
            <person name="Fairhead C."/>
            <person name="Ferry-Dumazet H."/>
            <person name="Groppi A."/>
            <person name="Hantraye F."/>
            <person name="Hennequin C."/>
            <person name="Jauniaux N."/>
            <person name="Joyet P."/>
            <person name="Kachouri R."/>
            <person name="Kerrest A."/>
            <person name="Koszul R."/>
            <person name="Lemaire M."/>
            <person name="Lesur I."/>
            <person name="Ma L."/>
            <person name="Muller H."/>
            <person name="Nicaud J.-M."/>
            <person name="Nikolski M."/>
            <person name="Oztas S."/>
            <person name="Ozier-Kalogeropoulos O."/>
            <person name="Pellenz S."/>
            <person name="Potier S."/>
            <person name="Richard G.-F."/>
            <person name="Straub M.-L."/>
            <person name="Suleau A."/>
            <person name="Swennen D."/>
            <person name="Tekaia F."/>
            <person name="Wesolowski-Louvel M."/>
            <person name="Westhof E."/>
            <person name="Wirth B."/>
            <person name="Zeniou-Meyer M."/>
            <person name="Zivanovic Y."/>
            <person name="Bolotin-Fukuhara M."/>
            <person name="Thierry A."/>
            <person name="Bouchier C."/>
            <person name="Caudron B."/>
            <person name="Scarpelli C."/>
            <person name="Gaillardin C."/>
            <person name="Weissenbach J."/>
            <person name="Wincker P."/>
            <person name="Souciet J.-L."/>
        </authorList>
    </citation>
    <scope>NUCLEOTIDE SEQUENCE [LARGE SCALE GENOMIC DNA]</scope>
    <source>
        <strain>CLIB 122 / E 150</strain>
    </source>
</reference>
<reference key="2">
    <citation type="journal article" date="2003" name="Cell Biol. Int.">
        <title>Sterol glucosyltransferases have different functional roles in Pichia pastoris and Yarrowia lipolytica.</title>
        <authorList>
            <person name="Stasyk O.V."/>
            <person name="Nazarko T.Y."/>
            <person name="Stasyk O.G."/>
            <person name="Krasovska O.S."/>
            <person name="Warnecke D.C."/>
            <person name="Nicaud J.-M."/>
            <person name="Cregg J.M."/>
            <person name="Sibirny A.A."/>
        </authorList>
    </citation>
    <scope>FUNCTION</scope>
</reference>
<accession>Q6C8M8</accession>